<geneLocation type="chloroplast"/>
<comment type="subcellular location">
    <subcellularLocation>
        <location>Plastid</location>
        <location>Chloroplast</location>
    </subcellularLocation>
</comment>
<comment type="similarity">
    <text evidence="1">Belongs to the universal ribosomal protein uS2 family.</text>
</comment>
<protein>
    <recommendedName>
        <fullName evidence="1">Small ribosomal subunit protein uS2c</fullName>
    </recommendedName>
    <alternativeName>
        <fullName>30S ribosomal protein S2, chloroplastic</fullName>
    </alternativeName>
</protein>
<evidence type="ECO:0000305" key="1"/>
<sequence>MTRRYWNIHLEEMMEAGVHFGHGTRKWNPRMAPYISAKRKGIHIINLTRTARFLSEACDLVFDAATRGKQFLIVGTKNKAADSVARAATRTRCHYVNKKWLGGMLTNWSTTETRLHKFRDLRTEQKTGGLNRLPKRDAAMFKRQLSHLQTYLGGIKYMTGLPDIVIIVDQQEEYRALQECITLGIPTICLIDTNCDPDLADISIPANDDAIASIRLILNKLVFAISEGRSSSIRNS</sequence>
<reference key="1">
    <citation type="journal article" date="2006" name="Plant Cell Rep.">
        <title>Complete sequence and organization of the cucumber (Cucumis sativus L. cv. Baekmibaekdadagi) chloroplast genome.</title>
        <authorList>
            <person name="Kim J.-S."/>
            <person name="Jung J.D."/>
            <person name="Lee J.-A."/>
            <person name="Park H.-W."/>
            <person name="Oh K.-H."/>
            <person name="Jeong W.J."/>
            <person name="Choi D.-W."/>
            <person name="Liu J.R."/>
            <person name="Cho K.Y."/>
        </authorList>
    </citation>
    <scope>NUCLEOTIDE SEQUENCE [LARGE SCALE GENOMIC DNA]</scope>
    <source>
        <strain>cv. Baekmibaekdadagi</strain>
    </source>
</reference>
<reference key="2">
    <citation type="journal article" date="2007" name="Cell. Mol. Biol. Lett.">
        <title>The complete structure of the cucumber (Cucumis sativus L.) chloroplast genome: its composition and comparative analysis.</title>
        <authorList>
            <person name="Plader W.W."/>
            <person name="Yukawa Y."/>
            <person name="Sugiura M."/>
            <person name="Malepszy S."/>
        </authorList>
    </citation>
    <scope>NUCLEOTIDE SEQUENCE [LARGE SCALE GENOMIC DNA]</scope>
    <source>
        <strain>cv. Borszczagowski</strain>
    </source>
</reference>
<reference key="3">
    <citation type="journal article" date="2007" name="Genome">
        <title>Sequencing cucumber (Cucumis sativus L.) chloroplast genomes identifies differences between chilling-tolerant and -susceptible cucumber lines.</title>
        <authorList>
            <person name="Chung S.-M."/>
            <person name="Gordon V.S."/>
            <person name="Staub J.E."/>
        </authorList>
    </citation>
    <scope>NUCLEOTIDE SEQUENCE [LARGE SCALE GENOMIC DNA]</scope>
    <source>
        <strain>cv. Chipper</strain>
        <strain>cv. Gy14</strain>
    </source>
</reference>
<dbReference type="EMBL" id="AJ970307">
    <property type="protein sequence ID" value="CAJ00747.1"/>
    <property type="molecule type" value="Genomic_DNA"/>
</dbReference>
<dbReference type="EMBL" id="DQ119058">
    <property type="protein sequence ID" value="AAZ94640.1"/>
    <property type="molecule type" value="Genomic_DNA"/>
</dbReference>
<dbReference type="EMBL" id="DQ865975">
    <property type="protein sequence ID" value="ABI97406.1"/>
    <property type="molecule type" value="Genomic_DNA"/>
</dbReference>
<dbReference type="EMBL" id="DQ865976">
    <property type="protein sequence ID" value="ABI98734.1"/>
    <property type="molecule type" value="Genomic_DNA"/>
</dbReference>
<dbReference type="RefSeq" id="YP_247588.1">
    <property type="nucleotide sequence ID" value="NC_007144.1"/>
</dbReference>
<dbReference type="SMR" id="Q4VZP4"/>
<dbReference type="GeneID" id="3429313"/>
<dbReference type="KEGG" id="csv:3429313"/>
<dbReference type="OrthoDB" id="565471at2759"/>
<dbReference type="GO" id="GO:0009507">
    <property type="term" value="C:chloroplast"/>
    <property type="evidence" value="ECO:0007669"/>
    <property type="project" value="UniProtKB-SubCell"/>
</dbReference>
<dbReference type="GO" id="GO:0015935">
    <property type="term" value="C:small ribosomal subunit"/>
    <property type="evidence" value="ECO:0007669"/>
    <property type="project" value="InterPro"/>
</dbReference>
<dbReference type="GO" id="GO:0003735">
    <property type="term" value="F:structural constituent of ribosome"/>
    <property type="evidence" value="ECO:0007669"/>
    <property type="project" value="InterPro"/>
</dbReference>
<dbReference type="GO" id="GO:0006412">
    <property type="term" value="P:translation"/>
    <property type="evidence" value="ECO:0007669"/>
    <property type="project" value="UniProtKB-UniRule"/>
</dbReference>
<dbReference type="CDD" id="cd01425">
    <property type="entry name" value="RPS2"/>
    <property type="match status" value="1"/>
</dbReference>
<dbReference type="FunFam" id="3.40.50.10490:FF:000101">
    <property type="match status" value="1"/>
</dbReference>
<dbReference type="FunFam" id="1.10.287.610:FF:000001">
    <property type="entry name" value="30S ribosomal protein S2"/>
    <property type="match status" value="1"/>
</dbReference>
<dbReference type="Gene3D" id="3.40.50.10490">
    <property type="entry name" value="Glucose-6-phosphate isomerase like protein, domain 1"/>
    <property type="match status" value="1"/>
</dbReference>
<dbReference type="Gene3D" id="1.10.287.610">
    <property type="entry name" value="Helix hairpin bin"/>
    <property type="match status" value="1"/>
</dbReference>
<dbReference type="HAMAP" id="MF_00291_B">
    <property type="entry name" value="Ribosomal_uS2_B"/>
    <property type="match status" value="1"/>
</dbReference>
<dbReference type="InterPro" id="IPR001865">
    <property type="entry name" value="Ribosomal_uS2"/>
</dbReference>
<dbReference type="InterPro" id="IPR005706">
    <property type="entry name" value="Ribosomal_uS2_bac/mit/plastid"/>
</dbReference>
<dbReference type="InterPro" id="IPR018130">
    <property type="entry name" value="Ribosomal_uS2_CS"/>
</dbReference>
<dbReference type="InterPro" id="IPR023591">
    <property type="entry name" value="Ribosomal_uS2_flav_dom_sf"/>
</dbReference>
<dbReference type="NCBIfam" id="TIGR01011">
    <property type="entry name" value="rpsB_bact"/>
    <property type="match status" value="1"/>
</dbReference>
<dbReference type="PANTHER" id="PTHR12534">
    <property type="entry name" value="30S RIBOSOMAL PROTEIN S2 PROKARYOTIC AND ORGANELLAR"/>
    <property type="match status" value="1"/>
</dbReference>
<dbReference type="PANTHER" id="PTHR12534:SF0">
    <property type="entry name" value="SMALL RIBOSOMAL SUBUNIT PROTEIN US2M"/>
    <property type="match status" value="1"/>
</dbReference>
<dbReference type="Pfam" id="PF00318">
    <property type="entry name" value="Ribosomal_S2"/>
    <property type="match status" value="1"/>
</dbReference>
<dbReference type="PRINTS" id="PR00395">
    <property type="entry name" value="RIBOSOMALS2"/>
</dbReference>
<dbReference type="SUPFAM" id="SSF52313">
    <property type="entry name" value="Ribosomal protein S2"/>
    <property type="match status" value="1"/>
</dbReference>
<dbReference type="PROSITE" id="PS00962">
    <property type="entry name" value="RIBOSOMAL_S2_1"/>
    <property type="match status" value="1"/>
</dbReference>
<dbReference type="PROSITE" id="PS00963">
    <property type="entry name" value="RIBOSOMAL_S2_2"/>
    <property type="match status" value="1"/>
</dbReference>
<keyword id="KW-0150">Chloroplast</keyword>
<keyword id="KW-0934">Plastid</keyword>
<keyword id="KW-0687">Ribonucleoprotein</keyword>
<keyword id="KW-0689">Ribosomal protein</keyword>
<accession>Q4VZP4</accession>
<feature type="chain" id="PRO_0000352106" description="Small ribosomal subunit protein uS2c">
    <location>
        <begin position="1"/>
        <end position="236"/>
    </location>
</feature>
<organism>
    <name type="scientific">Cucumis sativus</name>
    <name type="common">Cucumber</name>
    <dbReference type="NCBI Taxonomy" id="3659"/>
    <lineage>
        <taxon>Eukaryota</taxon>
        <taxon>Viridiplantae</taxon>
        <taxon>Streptophyta</taxon>
        <taxon>Embryophyta</taxon>
        <taxon>Tracheophyta</taxon>
        <taxon>Spermatophyta</taxon>
        <taxon>Magnoliopsida</taxon>
        <taxon>eudicotyledons</taxon>
        <taxon>Gunneridae</taxon>
        <taxon>Pentapetalae</taxon>
        <taxon>rosids</taxon>
        <taxon>fabids</taxon>
        <taxon>Cucurbitales</taxon>
        <taxon>Cucurbitaceae</taxon>
        <taxon>Benincaseae</taxon>
        <taxon>Cucumis</taxon>
    </lineage>
</organism>
<name>RR2_CUCSA</name>
<gene>
    <name type="primary">rps2</name>
    <name type="ordered locus">CsCp015</name>
</gene>
<proteinExistence type="inferred from homology"/>